<protein>
    <recommendedName>
        <fullName evidence="1">Phospho-N-acetylmuramoyl-pentapeptide-transferase</fullName>
        <ecNumber evidence="1">2.7.8.13</ecNumber>
    </recommendedName>
    <alternativeName>
        <fullName evidence="1">UDP-MurNAc-pentapeptide phosphotransferase</fullName>
    </alternativeName>
</protein>
<reference key="1">
    <citation type="journal article" date="2004" name="Proc. Natl. Acad. Sci. U.S.A.">
        <title>The genome sequence of the probiotic intestinal bacterium Lactobacillus johnsonii NCC 533.</title>
        <authorList>
            <person name="Pridmore R.D."/>
            <person name="Berger B."/>
            <person name="Desiere F."/>
            <person name="Vilanova D."/>
            <person name="Barretto C."/>
            <person name="Pittet A.-C."/>
            <person name="Zwahlen M.-C."/>
            <person name="Rouvet M."/>
            <person name="Altermann E."/>
            <person name="Barrangou R."/>
            <person name="Mollet B."/>
            <person name="Mercenier A."/>
            <person name="Klaenhammer T."/>
            <person name="Arigoni F."/>
            <person name="Schell M.A."/>
        </authorList>
    </citation>
    <scope>NUCLEOTIDE SEQUENCE [LARGE SCALE GENOMIC DNA]</scope>
    <source>
        <strain>CNCM I-1225 / La1 / NCC 533</strain>
    </source>
</reference>
<accession>Q74JY6</accession>
<dbReference type="EC" id="2.7.8.13" evidence="1"/>
<dbReference type="EMBL" id="AE017198">
    <property type="protein sequence ID" value="AAS08791.1"/>
    <property type="molecule type" value="Genomic_DNA"/>
</dbReference>
<dbReference type="RefSeq" id="WP_011161841.1">
    <property type="nucleotide sequence ID" value="NC_005362.1"/>
</dbReference>
<dbReference type="SMR" id="Q74JY6"/>
<dbReference type="KEGG" id="ljo:LJ_0970"/>
<dbReference type="eggNOG" id="COG0472">
    <property type="taxonomic scope" value="Bacteria"/>
</dbReference>
<dbReference type="HOGENOM" id="CLU_023982_0_1_9"/>
<dbReference type="UniPathway" id="UPA00219"/>
<dbReference type="Proteomes" id="UP000000581">
    <property type="component" value="Chromosome"/>
</dbReference>
<dbReference type="GO" id="GO:0005886">
    <property type="term" value="C:plasma membrane"/>
    <property type="evidence" value="ECO:0007669"/>
    <property type="project" value="UniProtKB-SubCell"/>
</dbReference>
<dbReference type="GO" id="GO:0046872">
    <property type="term" value="F:metal ion binding"/>
    <property type="evidence" value="ECO:0007669"/>
    <property type="project" value="UniProtKB-KW"/>
</dbReference>
<dbReference type="GO" id="GO:0008963">
    <property type="term" value="F:phospho-N-acetylmuramoyl-pentapeptide-transferase activity"/>
    <property type="evidence" value="ECO:0007669"/>
    <property type="project" value="UniProtKB-UniRule"/>
</dbReference>
<dbReference type="GO" id="GO:0051301">
    <property type="term" value="P:cell division"/>
    <property type="evidence" value="ECO:0007669"/>
    <property type="project" value="UniProtKB-KW"/>
</dbReference>
<dbReference type="GO" id="GO:0071555">
    <property type="term" value="P:cell wall organization"/>
    <property type="evidence" value="ECO:0007669"/>
    <property type="project" value="UniProtKB-KW"/>
</dbReference>
<dbReference type="GO" id="GO:0009252">
    <property type="term" value="P:peptidoglycan biosynthetic process"/>
    <property type="evidence" value="ECO:0007669"/>
    <property type="project" value="UniProtKB-UniRule"/>
</dbReference>
<dbReference type="GO" id="GO:0008360">
    <property type="term" value="P:regulation of cell shape"/>
    <property type="evidence" value="ECO:0007669"/>
    <property type="project" value="UniProtKB-KW"/>
</dbReference>
<dbReference type="CDD" id="cd06852">
    <property type="entry name" value="GT_MraY"/>
    <property type="match status" value="1"/>
</dbReference>
<dbReference type="HAMAP" id="MF_00038">
    <property type="entry name" value="MraY"/>
    <property type="match status" value="1"/>
</dbReference>
<dbReference type="InterPro" id="IPR000715">
    <property type="entry name" value="Glycosyl_transferase_4"/>
</dbReference>
<dbReference type="InterPro" id="IPR003524">
    <property type="entry name" value="PNAcMuramoyl-5peptid_Trfase"/>
</dbReference>
<dbReference type="InterPro" id="IPR018480">
    <property type="entry name" value="PNAcMuramoyl-5peptid_Trfase_CS"/>
</dbReference>
<dbReference type="NCBIfam" id="TIGR00445">
    <property type="entry name" value="mraY"/>
    <property type="match status" value="1"/>
</dbReference>
<dbReference type="PANTHER" id="PTHR22926">
    <property type="entry name" value="PHOSPHO-N-ACETYLMURAMOYL-PENTAPEPTIDE-TRANSFERASE"/>
    <property type="match status" value="1"/>
</dbReference>
<dbReference type="PANTHER" id="PTHR22926:SF5">
    <property type="entry name" value="PHOSPHO-N-ACETYLMURAMOYL-PENTAPEPTIDE-TRANSFERASE HOMOLOG"/>
    <property type="match status" value="1"/>
</dbReference>
<dbReference type="Pfam" id="PF00953">
    <property type="entry name" value="Glycos_transf_4"/>
    <property type="match status" value="1"/>
</dbReference>
<dbReference type="Pfam" id="PF10555">
    <property type="entry name" value="MraY_sig1"/>
    <property type="match status" value="1"/>
</dbReference>
<dbReference type="PROSITE" id="PS01347">
    <property type="entry name" value="MRAY_1"/>
    <property type="match status" value="1"/>
</dbReference>
<dbReference type="PROSITE" id="PS01348">
    <property type="entry name" value="MRAY_2"/>
    <property type="match status" value="1"/>
</dbReference>
<evidence type="ECO:0000255" key="1">
    <source>
        <dbReference type="HAMAP-Rule" id="MF_00038"/>
    </source>
</evidence>
<comment type="function">
    <text evidence="1">Catalyzes the initial step of the lipid cycle reactions in the biosynthesis of the cell wall peptidoglycan: transfers peptidoglycan precursor phospho-MurNAc-pentapeptide from UDP-MurNAc-pentapeptide onto the lipid carrier undecaprenyl phosphate, yielding undecaprenyl-pyrophosphoryl-MurNAc-pentapeptide, known as lipid I.</text>
</comment>
<comment type="catalytic activity">
    <reaction evidence="1">
        <text>UDP-N-acetyl-alpha-D-muramoyl-L-alanyl-gamma-D-glutamyl-L-lysyl-D-alanyl-D-alanine + di-trans,octa-cis-undecaprenyl phosphate = Mur2Ac(oyl-L-Ala-gamma-D-Glu-L-Lys-D-Ala-D-Ala)-di-trans,octa-cis-undecaprenyl diphosphate + UMP</text>
        <dbReference type="Rhea" id="RHEA:21920"/>
        <dbReference type="ChEBI" id="CHEBI:57865"/>
        <dbReference type="ChEBI" id="CHEBI:60032"/>
        <dbReference type="ChEBI" id="CHEBI:60392"/>
        <dbReference type="ChEBI" id="CHEBI:70758"/>
        <dbReference type="EC" id="2.7.8.13"/>
    </reaction>
</comment>
<comment type="cofactor">
    <cofactor evidence="1">
        <name>Mg(2+)</name>
        <dbReference type="ChEBI" id="CHEBI:18420"/>
    </cofactor>
</comment>
<comment type="pathway">
    <text evidence="1">Cell wall biogenesis; peptidoglycan biosynthesis.</text>
</comment>
<comment type="subcellular location">
    <subcellularLocation>
        <location evidence="1">Cell membrane</location>
        <topology evidence="1">Multi-pass membrane protein</topology>
    </subcellularLocation>
</comment>
<comment type="similarity">
    <text evidence="1">Belongs to the glycosyltransferase 4 family. MraY subfamily.</text>
</comment>
<keyword id="KW-0131">Cell cycle</keyword>
<keyword id="KW-0132">Cell division</keyword>
<keyword id="KW-1003">Cell membrane</keyword>
<keyword id="KW-0133">Cell shape</keyword>
<keyword id="KW-0961">Cell wall biogenesis/degradation</keyword>
<keyword id="KW-0460">Magnesium</keyword>
<keyword id="KW-0472">Membrane</keyword>
<keyword id="KW-0479">Metal-binding</keyword>
<keyword id="KW-0573">Peptidoglycan synthesis</keyword>
<keyword id="KW-0808">Transferase</keyword>
<keyword id="KW-0812">Transmembrane</keyword>
<keyword id="KW-1133">Transmembrane helix</keyword>
<feature type="chain" id="PRO_0000108839" description="Phospho-N-acetylmuramoyl-pentapeptide-transferase">
    <location>
        <begin position="1"/>
        <end position="319"/>
    </location>
</feature>
<feature type="transmembrane region" description="Helical" evidence="1">
    <location>
        <begin position="5"/>
        <end position="25"/>
    </location>
</feature>
<feature type="transmembrane region" description="Helical" evidence="1">
    <location>
        <begin position="51"/>
        <end position="71"/>
    </location>
</feature>
<feature type="transmembrane region" description="Helical" evidence="1">
    <location>
        <begin position="79"/>
        <end position="99"/>
    </location>
</feature>
<feature type="transmembrane region" description="Helical" evidence="1">
    <location>
        <begin position="116"/>
        <end position="136"/>
    </location>
</feature>
<feature type="transmembrane region" description="Helical" evidence="1">
    <location>
        <begin position="149"/>
        <end position="169"/>
    </location>
</feature>
<feature type="transmembrane region" description="Helical" evidence="1">
    <location>
        <begin position="172"/>
        <end position="192"/>
    </location>
</feature>
<feature type="transmembrane region" description="Helical" evidence="1">
    <location>
        <begin position="197"/>
        <end position="217"/>
    </location>
</feature>
<feature type="transmembrane region" description="Helical" evidence="1">
    <location>
        <begin position="224"/>
        <end position="244"/>
    </location>
</feature>
<feature type="transmembrane region" description="Helical" evidence="1">
    <location>
        <begin position="252"/>
        <end position="272"/>
    </location>
</feature>
<feature type="transmembrane region" description="Helical" evidence="1">
    <location>
        <begin position="299"/>
        <end position="319"/>
    </location>
</feature>
<gene>
    <name evidence="1" type="primary">mraY</name>
    <name type="ordered locus">LJ_0970</name>
</gene>
<sequence length="319" mass="35864">MQFSLIPFISSFALTVIFLPLFIGFMRMKHEGQVIRDEGPKWHEKKSGTPTMGGVVFMLAGVISTLWVLIWQKDLNKTAWILIIAFLGYGIIGFLDDGIKLYFKRNLGLRAWQKLLGQIIIAALIITLAFSDHFAFELYIPFAGMVRNSFLFSLFVLFWLVGFSNAVNLSDGLDGLATGLSIIAYATYAWIAYQERNWVIVVFTLSVIGGLVGFFIFNHKPAKIFMGDAGSLALGGGLATVSIFLHRPWSLLLIGIVFVLETLSVILQVISFQTTGKRIFKMTPIHHHFEMLGWSEWKVDIVFWIVGLIGSIIYLIIWG</sequence>
<name>MRAY_LACJO</name>
<organism>
    <name type="scientific">Lactobacillus johnsonii (strain CNCM I-12250 / La1 / NCC 533)</name>
    <dbReference type="NCBI Taxonomy" id="257314"/>
    <lineage>
        <taxon>Bacteria</taxon>
        <taxon>Bacillati</taxon>
        <taxon>Bacillota</taxon>
        <taxon>Bacilli</taxon>
        <taxon>Lactobacillales</taxon>
        <taxon>Lactobacillaceae</taxon>
        <taxon>Lactobacillus</taxon>
    </lineage>
</organism>
<proteinExistence type="inferred from homology"/>